<dbReference type="EMBL" id="AP008232">
    <property type="protein sequence ID" value="BAE74446.1"/>
    <property type="molecule type" value="Genomic_DNA"/>
</dbReference>
<dbReference type="RefSeq" id="WP_011411002.1">
    <property type="nucleotide sequence ID" value="NC_007712.1"/>
</dbReference>
<dbReference type="SMR" id="Q2NTS9"/>
<dbReference type="STRING" id="343509.SG1171"/>
<dbReference type="KEGG" id="sgl:SG1171"/>
<dbReference type="eggNOG" id="COG0322">
    <property type="taxonomic scope" value="Bacteria"/>
</dbReference>
<dbReference type="HOGENOM" id="CLU_014841_3_2_6"/>
<dbReference type="OrthoDB" id="9804933at2"/>
<dbReference type="BioCyc" id="SGLO343509:SGP1_RS10275-MONOMER"/>
<dbReference type="Proteomes" id="UP000001932">
    <property type="component" value="Chromosome"/>
</dbReference>
<dbReference type="GO" id="GO:0005737">
    <property type="term" value="C:cytoplasm"/>
    <property type="evidence" value="ECO:0007669"/>
    <property type="project" value="UniProtKB-SubCell"/>
</dbReference>
<dbReference type="GO" id="GO:0009380">
    <property type="term" value="C:excinuclease repair complex"/>
    <property type="evidence" value="ECO:0007669"/>
    <property type="project" value="InterPro"/>
</dbReference>
<dbReference type="GO" id="GO:0003677">
    <property type="term" value="F:DNA binding"/>
    <property type="evidence" value="ECO:0007669"/>
    <property type="project" value="UniProtKB-UniRule"/>
</dbReference>
<dbReference type="GO" id="GO:0009381">
    <property type="term" value="F:excinuclease ABC activity"/>
    <property type="evidence" value="ECO:0007669"/>
    <property type="project" value="UniProtKB-UniRule"/>
</dbReference>
<dbReference type="GO" id="GO:0006289">
    <property type="term" value="P:nucleotide-excision repair"/>
    <property type="evidence" value="ECO:0007669"/>
    <property type="project" value="UniProtKB-UniRule"/>
</dbReference>
<dbReference type="GO" id="GO:0009432">
    <property type="term" value="P:SOS response"/>
    <property type="evidence" value="ECO:0007669"/>
    <property type="project" value="UniProtKB-UniRule"/>
</dbReference>
<dbReference type="CDD" id="cd10434">
    <property type="entry name" value="GIY-YIG_UvrC_Cho"/>
    <property type="match status" value="1"/>
</dbReference>
<dbReference type="FunFam" id="1.10.150.20:FF:000005">
    <property type="entry name" value="UvrABC system protein C"/>
    <property type="match status" value="1"/>
</dbReference>
<dbReference type="FunFam" id="3.30.420.340:FF:000001">
    <property type="entry name" value="UvrABC system protein C"/>
    <property type="match status" value="1"/>
</dbReference>
<dbReference type="FunFam" id="3.40.1440.10:FF:000001">
    <property type="entry name" value="UvrABC system protein C"/>
    <property type="match status" value="1"/>
</dbReference>
<dbReference type="FunFam" id="4.10.860.10:FF:000002">
    <property type="entry name" value="UvrABC system protein C"/>
    <property type="match status" value="1"/>
</dbReference>
<dbReference type="Gene3D" id="1.10.150.20">
    <property type="entry name" value="5' to 3' exonuclease, C-terminal subdomain"/>
    <property type="match status" value="1"/>
</dbReference>
<dbReference type="Gene3D" id="3.40.1440.10">
    <property type="entry name" value="GIY-YIG endonuclease"/>
    <property type="match status" value="1"/>
</dbReference>
<dbReference type="Gene3D" id="4.10.860.10">
    <property type="entry name" value="UVR domain"/>
    <property type="match status" value="1"/>
</dbReference>
<dbReference type="Gene3D" id="3.30.420.340">
    <property type="entry name" value="UvrC, RNAse H endonuclease domain"/>
    <property type="match status" value="1"/>
</dbReference>
<dbReference type="HAMAP" id="MF_00203">
    <property type="entry name" value="UvrC"/>
    <property type="match status" value="1"/>
</dbReference>
<dbReference type="InterPro" id="IPR000305">
    <property type="entry name" value="GIY-YIG_endonuc"/>
</dbReference>
<dbReference type="InterPro" id="IPR035901">
    <property type="entry name" value="GIY-YIG_endonuc_sf"/>
</dbReference>
<dbReference type="InterPro" id="IPR047296">
    <property type="entry name" value="GIY-YIG_UvrC_Cho"/>
</dbReference>
<dbReference type="InterPro" id="IPR003583">
    <property type="entry name" value="Hlx-hairpin-Hlx_DNA-bd_motif"/>
</dbReference>
<dbReference type="InterPro" id="IPR010994">
    <property type="entry name" value="RuvA_2-like"/>
</dbReference>
<dbReference type="InterPro" id="IPR001943">
    <property type="entry name" value="UVR_dom"/>
</dbReference>
<dbReference type="InterPro" id="IPR036876">
    <property type="entry name" value="UVR_dom_sf"/>
</dbReference>
<dbReference type="InterPro" id="IPR050066">
    <property type="entry name" value="UvrABC_protein_C"/>
</dbReference>
<dbReference type="InterPro" id="IPR004791">
    <property type="entry name" value="UvrC"/>
</dbReference>
<dbReference type="InterPro" id="IPR001162">
    <property type="entry name" value="UvrC_RNase_H_dom"/>
</dbReference>
<dbReference type="InterPro" id="IPR038476">
    <property type="entry name" value="UvrC_RNase_H_dom_sf"/>
</dbReference>
<dbReference type="NCBIfam" id="NF001824">
    <property type="entry name" value="PRK00558.1-5"/>
    <property type="match status" value="1"/>
</dbReference>
<dbReference type="NCBIfam" id="TIGR00194">
    <property type="entry name" value="uvrC"/>
    <property type="match status" value="1"/>
</dbReference>
<dbReference type="PANTHER" id="PTHR30562:SF1">
    <property type="entry name" value="UVRABC SYSTEM PROTEIN C"/>
    <property type="match status" value="1"/>
</dbReference>
<dbReference type="PANTHER" id="PTHR30562">
    <property type="entry name" value="UVRC/OXIDOREDUCTASE"/>
    <property type="match status" value="1"/>
</dbReference>
<dbReference type="Pfam" id="PF01541">
    <property type="entry name" value="GIY-YIG"/>
    <property type="match status" value="1"/>
</dbReference>
<dbReference type="Pfam" id="PF14520">
    <property type="entry name" value="HHH_5"/>
    <property type="match status" value="1"/>
</dbReference>
<dbReference type="Pfam" id="PF02151">
    <property type="entry name" value="UVR"/>
    <property type="match status" value="1"/>
</dbReference>
<dbReference type="Pfam" id="PF22920">
    <property type="entry name" value="UvrC_RNaseH"/>
    <property type="match status" value="1"/>
</dbReference>
<dbReference type="Pfam" id="PF08459">
    <property type="entry name" value="UvrC_RNaseH_dom"/>
    <property type="match status" value="1"/>
</dbReference>
<dbReference type="SMART" id="SM00465">
    <property type="entry name" value="GIYc"/>
    <property type="match status" value="1"/>
</dbReference>
<dbReference type="SMART" id="SM00278">
    <property type="entry name" value="HhH1"/>
    <property type="match status" value="2"/>
</dbReference>
<dbReference type="SUPFAM" id="SSF46600">
    <property type="entry name" value="C-terminal UvrC-binding domain of UvrB"/>
    <property type="match status" value="1"/>
</dbReference>
<dbReference type="SUPFAM" id="SSF82771">
    <property type="entry name" value="GIY-YIG endonuclease"/>
    <property type="match status" value="1"/>
</dbReference>
<dbReference type="SUPFAM" id="SSF47781">
    <property type="entry name" value="RuvA domain 2-like"/>
    <property type="match status" value="1"/>
</dbReference>
<dbReference type="PROSITE" id="PS50164">
    <property type="entry name" value="GIY_YIG"/>
    <property type="match status" value="1"/>
</dbReference>
<dbReference type="PROSITE" id="PS50151">
    <property type="entry name" value="UVR"/>
    <property type="match status" value="1"/>
</dbReference>
<dbReference type="PROSITE" id="PS50165">
    <property type="entry name" value="UVRC"/>
    <property type="match status" value="1"/>
</dbReference>
<proteinExistence type="inferred from homology"/>
<evidence type="ECO:0000255" key="1">
    <source>
        <dbReference type="HAMAP-Rule" id="MF_00203"/>
    </source>
</evidence>
<protein>
    <recommendedName>
        <fullName evidence="1">UvrABC system protein C</fullName>
        <shortName evidence="1">Protein UvrC</shortName>
    </recommendedName>
    <alternativeName>
        <fullName evidence="1">Excinuclease ABC subunit C</fullName>
    </alternativeName>
</protein>
<accession>Q2NTS9</accession>
<comment type="function">
    <text evidence="1">The UvrABC repair system catalyzes the recognition and processing of DNA lesions. UvrC both incises the 5' and 3' sides of the lesion. The N-terminal half is responsible for the 3' incision and the C-terminal half is responsible for the 5' incision.</text>
</comment>
<comment type="subunit">
    <text evidence="1">Interacts with UvrB in an incision complex.</text>
</comment>
<comment type="subcellular location">
    <subcellularLocation>
        <location evidence="1">Cytoplasm</location>
    </subcellularLocation>
</comment>
<comment type="similarity">
    <text evidence="1">Belongs to the UvrC family.</text>
</comment>
<gene>
    <name evidence="1" type="primary">uvrC</name>
    <name type="ordered locus">SG1171</name>
</gene>
<keyword id="KW-0963">Cytoplasm</keyword>
<keyword id="KW-0227">DNA damage</keyword>
<keyword id="KW-0228">DNA excision</keyword>
<keyword id="KW-0234">DNA repair</keyword>
<keyword id="KW-0267">Excision nuclease</keyword>
<keyword id="KW-0742">SOS response</keyword>
<feature type="chain" id="PRO_0000264952" description="UvrABC system protein C">
    <location>
        <begin position="1"/>
        <end position="610"/>
    </location>
</feature>
<feature type="domain" description="GIY-YIG" evidence="1">
    <location>
        <begin position="16"/>
        <end position="94"/>
    </location>
</feature>
<feature type="domain" description="UVR" evidence="1">
    <location>
        <begin position="204"/>
        <end position="239"/>
    </location>
</feature>
<organism>
    <name type="scientific">Sodalis glossinidius (strain morsitans)</name>
    <dbReference type="NCBI Taxonomy" id="343509"/>
    <lineage>
        <taxon>Bacteria</taxon>
        <taxon>Pseudomonadati</taxon>
        <taxon>Pseudomonadota</taxon>
        <taxon>Gammaproteobacteria</taxon>
        <taxon>Enterobacterales</taxon>
        <taxon>Bruguierivoracaceae</taxon>
        <taxon>Sodalis</taxon>
    </lineage>
</organism>
<name>UVRC_SODGM</name>
<reference key="1">
    <citation type="journal article" date="2006" name="Genome Res.">
        <title>Massive genome erosion and functional adaptations provide insights into the symbiotic lifestyle of Sodalis glossinidius in the tsetse host.</title>
        <authorList>
            <person name="Toh H."/>
            <person name="Weiss B.L."/>
            <person name="Perkin S.A.H."/>
            <person name="Yamashita A."/>
            <person name="Oshima K."/>
            <person name="Hattori M."/>
            <person name="Aksoy S."/>
        </authorList>
    </citation>
    <scope>NUCLEOTIDE SEQUENCE [LARGE SCALE GENOMIC DNA]</scope>
    <source>
        <strain>morsitans</strain>
    </source>
</reference>
<sequence>MTDSFNAKQFLSTVTSQPGVYSMYDLSGTVIYVGKAKDLKKRLASYFRAQVASRKTEALVKSIHHIDVTITHTETEALLLEHNYIKLYQPRYNVLLRDDKSYPFIFLSGDAHPRITSHRGAKHAKGDYFGPFPNGYAVKETLALLQKLFPIRQCEDSVYRNRSRPCLQYQIGRCLGPCVAGLVSDEEYQQQVEYVRLFLSGKDQQVLNQLVERMELASRALNFEDAAHARDQIQAVRRVTEKQFVSGDREDLDVIGVSFDAGMACVHVLFIRQGKVLGSRSYFPKVPVGTELAEVVQTFVGQFYLQGSQMRSLPGEILLDFTLPEKTLLAASLSEQAGRKIQIQTQPRGDRARYLKLARTNAATALVTKLSQQSTVHQRLAALAELLGIQAINRMECFDISHTMGEHTIASCVIFDGNGSVRAEYRRYNIEGITPGDDYAAMDQVLRRRYGKALEEKKIPDVVIIDGGKGQLGMAKAVFEQLEVPWDKSRVVLLGVAKGVDRKAGLETLFLQPHGEGMALPPDSPALHVIQHIRDDSHNHAITGHRNKRAKVKNTSALELIEGVGPRRRQSLLKYMGGLQPLRNASVEEIAQVPGISGALAEKIFNALKH</sequence>